<name>SECA_LIMRD</name>
<sequence>MANILKKWIESDRRELRRINKIANKVESYAKQMSELTDEQLQAKTDEFRERYKKGESLDHMLPEAFAVSREGAKRVLGLYPFHVQIMGGIVLHEGNIAEMRTGEGKTLTATMPVYLNAISGKGVHVITVNEYLSKRDATEMGQLYNWLGCSVGINNSEMSPDQKREAYKADIMYSTNSEIGFDYLRDNMAVYKEDQVQRGLNYALVDEVDSILIDEARTPLIISGPGTGTSKLYKQTDRFVKQLKKDVDYKIDLESKTVSLTDEGIKKAEKYFNLKNLYDPENTALTHHLDQALRANYIMLLDKDYVVQDGEVLIVDSFTGRVMEGRRFSDGLHQAIEAKEGVEIQEENKTMANITYQNLFRMYNKLAGMTGTAKTEQEEFREIYNMETITIPTNRPVQRKDEPDLLYPTLQSKFAAVVDRIKKLHAKGQPILVGTVAVETSEYLSQLLDKENIPHVVLNAKNHAKEAEIVKNAGQKGAVTIATNMAGRGTDIKLGPGVREIGGLAVIGTERHESRRIDNQLRGRSGRQGDPGLSQFYLSLEDDLMKRFGGDRIKAFLERMKVNDEDAVIKSRFLTHQVESAQKRVEGNNYDSRKNVLQYDDVMREQREIIYKERQQIITEDKSLKWVLMPMFRRTIQREVDQHTLGDKKDWDLQGIVDFAEEVLIKPDTITVKDLEGKSPQEMVDYLMTFAQGVYKEKQKQLYDPAQMLEFEKVVILRVVDSHWTDHIDIMDQFRQSVGLRGYGQLNPLVEYQTAGYHMFEQMIADIEYETTRLFMKSEIRQNVTR</sequence>
<keyword id="KW-0067">ATP-binding</keyword>
<keyword id="KW-1003">Cell membrane</keyword>
<keyword id="KW-0963">Cytoplasm</keyword>
<keyword id="KW-0472">Membrane</keyword>
<keyword id="KW-0547">Nucleotide-binding</keyword>
<keyword id="KW-0653">Protein transport</keyword>
<keyword id="KW-1185">Reference proteome</keyword>
<keyword id="KW-1278">Translocase</keyword>
<keyword id="KW-0811">Translocation</keyword>
<keyword id="KW-0813">Transport</keyword>
<evidence type="ECO:0000255" key="1">
    <source>
        <dbReference type="HAMAP-Rule" id="MF_01382"/>
    </source>
</evidence>
<gene>
    <name evidence="1" type="primary">secA</name>
    <name type="ordered locus">Lreu_0365</name>
</gene>
<feature type="chain" id="PRO_1000073484" description="Protein translocase subunit SecA">
    <location>
        <begin position="1"/>
        <end position="787"/>
    </location>
</feature>
<feature type="binding site" evidence="1">
    <location>
        <position position="85"/>
    </location>
    <ligand>
        <name>ATP</name>
        <dbReference type="ChEBI" id="CHEBI:30616"/>
    </ligand>
</feature>
<feature type="binding site" evidence="1">
    <location>
        <begin position="103"/>
        <end position="107"/>
    </location>
    <ligand>
        <name>ATP</name>
        <dbReference type="ChEBI" id="CHEBI:30616"/>
    </ligand>
</feature>
<feature type="binding site" evidence="1">
    <location>
        <position position="492"/>
    </location>
    <ligand>
        <name>ATP</name>
        <dbReference type="ChEBI" id="CHEBI:30616"/>
    </ligand>
</feature>
<organism>
    <name type="scientific">Limosilactobacillus reuteri (strain DSM 20016)</name>
    <name type="common">Lactobacillus reuteri</name>
    <dbReference type="NCBI Taxonomy" id="557436"/>
    <lineage>
        <taxon>Bacteria</taxon>
        <taxon>Bacillati</taxon>
        <taxon>Bacillota</taxon>
        <taxon>Bacilli</taxon>
        <taxon>Lactobacillales</taxon>
        <taxon>Lactobacillaceae</taxon>
        <taxon>Limosilactobacillus</taxon>
    </lineage>
</organism>
<reference key="1">
    <citation type="journal article" date="2011" name="PLoS Genet.">
        <title>The evolution of host specialization in the vertebrate gut symbiont Lactobacillus reuteri.</title>
        <authorList>
            <person name="Frese S.A."/>
            <person name="Benson A.K."/>
            <person name="Tannock G.W."/>
            <person name="Loach D.M."/>
            <person name="Kim J."/>
            <person name="Zhang M."/>
            <person name="Oh P.L."/>
            <person name="Heng N.C."/>
            <person name="Patil P.B."/>
            <person name="Juge N."/>
            <person name="Mackenzie D.A."/>
            <person name="Pearson B.M."/>
            <person name="Lapidus A."/>
            <person name="Dalin E."/>
            <person name="Tice H."/>
            <person name="Goltsman E."/>
            <person name="Land M."/>
            <person name="Hauser L."/>
            <person name="Ivanova N."/>
            <person name="Kyrpides N.C."/>
            <person name="Walter J."/>
        </authorList>
    </citation>
    <scope>NUCLEOTIDE SEQUENCE [LARGE SCALE GENOMIC DNA]</scope>
    <source>
        <strain>DSM 20016</strain>
    </source>
</reference>
<comment type="function">
    <text evidence="1">Part of the Sec protein translocase complex. Interacts with the SecYEG preprotein conducting channel. Has a central role in coupling the hydrolysis of ATP to the transfer of proteins into and across the cell membrane, serving as an ATP-driven molecular motor driving the stepwise translocation of polypeptide chains across the membrane.</text>
</comment>
<comment type="catalytic activity">
    <reaction evidence="1">
        <text>ATP + H2O + cellular proteinSide 1 = ADP + phosphate + cellular proteinSide 2.</text>
        <dbReference type="EC" id="7.4.2.8"/>
    </reaction>
</comment>
<comment type="subunit">
    <text evidence="1">Monomer and homodimer. Part of the essential Sec protein translocation apparatus which comprises SecA, SecYEG and auxiliary proteins SecDF. Other proteins may also be involved.</text>
</comment>
<comment type="subcellular location">
    <subcellularLocation>
        <location evidence="1">Cell membrane</location>
        <topology evidence="1">Peripheral membrane protein</topology>
        <orientation evidence="1">Cytoplasmic side</orientation>
    </subcellularLocation>
    <subcellularLocation>
        <location evidence="1">Cytoplasm</location>
    </subcellularLocation>
    <text evidence="1">Distribution is 50-50.</text>
</comment>
<comment type="similarity">
    <text evidence="1">Belongs to the SecA family.</text>
</comment>
<protein>
    <recommendedName>
        <fullName evidence="1">Protein translocase subunit SecA</fullName>
        <ecNumber evidence="1">7.4.2.8</ecNumber>
    </recommendedName>
</protein>
<accession>A5VIG0</accession>
<dbReference type="EC" id="7.4.2.8" evidence="1"/>
<dbReference type="EMBL" id="CP000705">
    <property type="protein sequence ID" value="ABQ82634.1"/>
    <property type="molecule type" value="Genomic_DNA"/>
</dbReference>
<dbReference type="RefSeq" id="WP_003666386.1">
    <property type="nucleotide sequence ID" value="NZ_AZDD01000014.1"/>
</dbReference>
<dbReference type="SMR" id="A5VIG0"/>
<dbReference type="STRING" id="557436.Lreu_0365"/>
<dbReference type="GeneID" id="77190169"/>
<dbReference type="KEGG" id="lre:Lreu_0365"/>
<dbReference type="PATRIC" id="fig|557436.17.peg.405"/>
<dbReference type="eggNOG" id="COG0653">
    <property type="taxonomic scope" value="Bacteria"/>
</dbReference>
<dbReference type="HOGENOM" id="CLU_005314_3_2_9"/>
<dbReference type="Proteomes" id="UP000001991">
    <property type="component" value="Chromosome"/>
</dbReference>
<dbReference type="GO" id="GO:0031522">
    <property type="term" value="C:cell envelope Sec protein transport complex"/>
    <property type="evidence" value="ECO:0007669"/>
    <property type="project" value="TreeGrafter"/>
</dbReference>
<dbReference type="GO" id="GO:0005829">
    <property type="term" value="C:cytosol"/>
    <property type="evidence" value="ECO:0007669"/>
    <property type="project" value="TreeGrafter"/>
</dbReference>
<dbReference type="GO" id="GO:0005886">
    <property type="term" value="C:plasma membrane"/>
    <property type="evidence" value="ECO:0007669"/>
    <property type="project" value="UniProtKB-SubCell"/>
</dbReference>
<dbReference type="GO" id="GO:0005524">
    <property type="term" value="F:ATP binding"/>
    <property type="evidence" value="ECO:0007669"/>
    <property type="project" value="UniProtKB-UniRule"/>
</dbReference>
<dbReference type="GO" id="GO:0008564">
    <property type="term" value="F:protein-exporting ATPase activity"/>
    <property type="evidence" value="ECO:0007669"/>
    <property type="project" value="UniProtKB-EC"/>
</dbReference>
<dbReference type="GO" id="GO:0065002">
    <property type="term" value="P:intracellular protein transmembrane transport"/>
    <property type="evidence" value="ECO:0007669"/>
    <property type="project" value="UniProtKB-UniRule"/>
</dbReference>
<dbReference type="GO" id="GO:0017038">
    <property type="term" value="P:protein import"/>
    <property type="evidence" value="ECO:0007669"/>
    <property type="project" value="InterPro"/>
</dbReference>
<dbReference type="GO" id="GO:0006605">
    <property type="term" value="P:protein targeting"/>
    <property type="evidence" value="ECO:0007669"/>
    <property type="project" value="UniProtKB-UniRule"/>
</dbReference>
<dbReference type="GO" id="GO:0043952">
    <property type="term" value="P:protein transport by the Sec complex"/>
    <property type="evidence" value="ECO:0007669"/>
    <property type="project" value="TreeGrafter"/>
</dbReference>
<dbReference type="CDD" id="cd17928">
    <property type="entry name" value="DEXDc_SecA"/>
    <property type="match status" value="1"/>
</dbReference>
<dbReference type="CDD" id="cd18803">
    <property type="entry name" value="SF2_C_secA"/>
    <property type="match status" value="1"/>
</dbReference>
<dbReference type="FunFam" id="3.40.50.300:FF:000429">
    <property type="entry name" value="Preprotein translocase subunit SecA"/>
    <property type="match status" value="1"/>
</dbReference>
<dbReference type="FunFam" id="3.90.1440.10:FF:000001">
    <property type="entry name" value="Preprotein translocase subunit SecA"/>
    <property type="match status" value="1"/>
</dbReference>
<dbReference type="Gene3D" id="1.10.3060.10">
    <property type="entry name" value="Helical scaffold and wing domains of SecA"/>
    <property type="match status" value="1"/>
</dbReference>
<dbReference type="Gene3D" id="3.40.50.300">
    <property type="entry name" value="P-loop containing nucleotide triphosphate hydrolases"/>
    <property type="match status" value="2"/>
</dbReference>
<dbReference type="Gene3D" id="3.90.1440.10">
    <property type="entry name" value="SecA, preprotein cross-linking domain"/>
    <property type="match status" value="1"/>
</dbReference>
<dbReference type="HAMAP" id="MF_01382">
    <property type="entry name" value="SecA"/>
    <property type="match status" value="1"/>
</dbReference>
<dbReference type="InterPro" id="IPR014001">
    <property type="entry name" value="Helicase_ATP-bd"/>
</dbReference>
<dbReference type="InterPro" id="IPR001650">
    <property type="entry name" value="Helicase_C-like"/>
</dbReference>
<dbReference type="InterPro" id="IPR027417">
    <property type="entry name" value="P-loop_NTPase"/>
</dbReference>
<dbReference type="InterPro" id="IPR000185">
    <property type="entry name" value="SecA"/>
</dbReference>
<dbReference type="InterPro" id="IPR020937">
    <property type="entry name" value="SecA_CS"/>
</dbReference>
<dbReference type="InterPro" id="IPR011115">
    <property type="entry name" value="SecA_DEAD"/>
</dbReference>
<dbReference type="InterPro" id="IPR014018">
    <property type="entry name" value="SecA_motor_DEAD"/>
</dbReference>
<dbReference type="InterPro" id="IPR011130">
    <property type="entry name" value="SecA_preprotein_X-link_dom"/>
</dbReference>
<dbReference type="InterPro" id="IPR044722">
    <property type="entry name" value="SecA_SF2_C"/>
</dbReference>
<dbReference type="InterPro" id="IPR011116">
    <property type="entry name" value="SecA_Wing/Scaffold"/>
</dbReference>
<dbReference type="InterPro" id="IPR036266">
    <property type="entry name" value="SecA_Wing/Scaffold_sf"/>
</dbReference>
<dbReference type="InterPro" id="IPR036670">
    <property type="entry name" value="SecA_X-link_sf"/>
</dbReference>
<dbReference type="NCBIfam" id="NF006630">
    <property type="entry name" value="PRK09200.1"/>
    <property type="match status" value="1"/>
</dbReference>
<dbReference type="NCBIfam" id="NF009538">
    <property type="entry name" value="PRK12904.1"/>
    <property type="match status" value="1"/>
</dbReference>
<dbReference type="NCBIfam" id="TIGR00963">
    <property type="entry name" value="secA"/>
    <property type="match status" value="1"/>
</dbReference>
<dbReference type="PANTHER" id="PTHR30612:SF0">
    <property type="entry name" value="CHLOROPLAST PROTEIN-TRANSPORTING ATPASE"/>
    <property type="match status" value="1"/>
</dbReference>
<dbReference type="PANTHER" id="PTHR30612">
    <property type="entry name" value="SECA INNER MEMBRANE COMPONENT OF SEC PROTEIN SECRETION SYSTEM"/>
    <property type="match status" value="1"/>
</dbReference>
<dbReference type="Pfam" id="PF21090">
    <property type="entry name" value="P-loop_SecA"/>
    <property type="match status" value="2"/>
</dbReference>
<dbReference type="Pfam" id="PF07517">
    <property type="entry name" value="SecA_DEAD"/>
    <property type="match status" value="1"/>
</dbReference>
<dbReference type="Pfam" id="PF01043">
    <property type="entry name" value="SecA_PP_bind"/>
    <property type="match status" value="1"/>
</dbReference>
<dbReference type="Pfam" id="PF07516">
    <property type="entry name" value="SecA_SW"/>
    <property type="match status" value="1"/>
</dbReference>
<dbReference type="PRINTS" id="PR00906">
    <property type="entry name" value="SECA"/>
</dbReference>
<dbReference type="SMART" id="SM00957">
    <property type="entry name" value="SecA_DEAD"/>
    <property type="match status" value="1"/>
</dbReference>
<dbReference type="SMART" id="SM00958">
    <property type="entry name" value="SecA_PP_bind"/>
    <property type="match status" value="1"/>
</dbReference>
<dbReference type="SUPFAM" id="SSF81886">
    <property type="entry name" value="Helical scaffold and wing domains of SecA"/>
    <property type="match status" value="1"/>
</dbReference>
<dbReference type="SUPFAM" id="SSF52540">
    <property type="entry name" value="P-loop containing nucleoside triphosphate hydrolases"/>
    <property type="match status" value="2"/>
</dbReference>
<dbReference type="SUPFAM" id="SSF81767">
    <property type="entry name" value="Pre-protein crosslinking domain of SecA"/>
    <property type="match status" value="1"/>
</dbReference>
<dbReference type="PROSITE" id="PS01312">
    <property type="entry name" value="SECA"/>
    <property type="match status" value="1"/>
</dbReference>
<dbReference type="PROSITE" id="PS51196">
    <property type="entry name" value="SECA_MOTOR_DEAD"/>
    <property type="match status" value="1"/>
</dbReference>
<proteinExistence type="inferred from homology"/>